<keyword id="KW-0002">3D-structure</keyword>
<keyword id="KW-0010">Activator</keyword>
<keyword id="KW-0963">Cytoplasm</keyword>
<keyword id="KW-0238">DNA-binding</keyword>
<keyword id="KW-0539">Nucleus</keyword>
<keyword id="KW-0597">Phosphoprotein</keyword>
<keyword id="KW-1185">Reference proteome</keyword>
<keyword id="KW-0804">Transcription</keyword>
<keyword id="KW-0805">Transcription regulation</keyword>
<evidence type="ECO:0000255" key="1">
    <source>
        <dbReference type="PROSITE-ProRule" id="PRU00981"/>
    </source>
</evidence>
<evidence type="ECO:0000256" key="2">
    <source>
        <dbReference type="SAM" id="MobiDB-lite"/>
    </source>
</evidence>
<evidence type="ECO:0000269" key="3">
    <source>
    </source>
</evidence>
<evidence type="ECO:0000269" key="4">
    <source>
    </source>
</evidence>
<evidence type="ECO:0000269" key="5">
    <source>
    </source>
</evidence>
<evidence type="ECO:0000269" key="6">
    <source>
    </source>
</evidence>
<evidence type="ECO:0000269" key="7">
    <source>
    </source>
</evidence>
<evidence type="ECO:0000269" key="8">
    <source>
    </source>
</evidence>
<evidence type="ECO:0000269" key="9">
    <source>
    </source>
</evidence>
<evidence type="ECO:0000305" key="10"/>
<evidence type="ECO:0007744" key="11">
    <source>
    </source>
</evidence>
<evidence type="ECO:0007744" key="12">
    <source>
    </source>
</evidence>
<evidence type="ECO:0007744" key="13">
    <source>
    </source>
</evidence>
<evidence type="ECO:0007744" key="14">
    <source>
    </source>
</evidence>
<evidence type="ECO:0007829" key="15">
    <source>
        <dbReference type="PDB" id="1A0A"/>
    </source>
</evidence>
<name>PHO4_YEAST</name>
<accession>P07270</accession>
<accession>D6VTR7</accession>
<gene>
    <name type="primary">PHO4</name>
    <name type="ordered locus">YFR034C</name>
</gene>
<protein>
    <recommendedName>
        <fullName>Phosphate system positive regulatory protein PHO4</fullName>
    </recommendedName>
</protein>
<sequence length="312" mass="34089">MGRTTSEGIHGFVDDLEPKSSILDKVGDFITVNTKRHDGREDFNEQNDELNSQENHNSSENGNENENEQDSLALDDLDRAFELVEGMDMDWMMPSHAHHSPATTATIKPRLLYSPLIHTQSAVPVTISPNLVATATSTTSANKVTKNKSNSSPYLNKRRGKPGPDSATSLFELPDSVIPTPKPKPKPKQYPKVILPSNSTRRVSPVTAKTSSSAEGVVVASESPVIAPHGSSHSRSLSKRRSSGALVDDDKRESHKHAEQARRNRLAVALHELASLIPAEWKQQNVSAAPSKATTVEAACRYIRHLQQNVST</sequence>
<proteinExistence type="evidence at protein level"/>
<organism>
    <name type="scientific">Saccharomyces cerevisiae (strain ATCC 204508 / S288c)</name>
    <name type="common">Baker's yeast</name>
    <dbReference type="NCBI Taxonomy" id="559292"/>
    <lineage>
        <taxon>Eukaryota</taxon>
        <taxon>Fungi</taxon>
        <taxon>Dikarya</taxon>
        <taxon>Ascomycota</taxon>
        <taxon>Saccharomycotina</taxon>
        <taxon>Saccharomycetes</taxon>
        <taxon>Saccharomycetales</taxon>
        <taxon>Saccharomycetaceae</taxon>
        <taxon>Saccharomyces</taxon>
    </lineage>
</organism>
<dbReference type="EMBL" id="X03719">
    <property type="protein sequence ID" value="CAA27345.1"/>
    <property type="status" value="ALT_FRAME"/>
    <property type="molecule type" value="Genomic_DNA"/>
</dbReference>
<dbReference type="EMBL" id="D50617">
    <property type="protein sequence ID" value="BAA09273.1"/>
    <property type="molecule type" value="Genomic_DNA"/>
</dbReference>
<dbReference type="EMBL" id="AY692776">
    <property type="protein sequence ID" value="AAT92795.1"/>
    <property type="molecule type" value="Genomic_DNA"/>
</dbReference>
<dbReference type="EMBL" id="BK006940">
    <property type="protein sequence ID" value="DAA12477.1"/>
    <property type="molecule type" value="Genomic_DNA"/>
</dbReference>
<dbReference type="PIR" id="S56289">
    <property type="entry name" value="S56289"/>
</dbReference>
<dbReference type="RefSeq" id="NP_116692.1">
    <property type="nucleotide sequence ID" value="NM_001179999.1"/>
</dbReference>
<dbReference type="PDB" id="1A0A">
    <property type="method" value="X-ray"/>
    <property type="resolution" value="2.80 A"/>
    <property type="chains" value="A/B=251-312"/>
</dbReference>
<dbReference type="PDB" id="3W3X">
    <property type="method" value="X-ray"/>
    <property type="resolution" value="2.90 A"/>
    <property type="chains" value="B=140-166"/>
</dbReference>
<dbReference type="PDBsum" id="1A0A"/>
<dbReference type="PDBsum" id="3W3X"/>
<dbReference type="SMR" id="P07270"/>
<dbReference type="BioGRID" id="31191">
    <property type="interactions" value="263"/>
</dbReference>
<dbReference type="DIP" id="DIP-911N"/>
<dbReference type="ELM" id="P07270"/>
<dbReference type="FunCoup" id="P07270">
    <property type="interactions" value="1328"/>
</dbReference>
<dbReference type="IntAct" id="P07270">
    <property type="interactions" value="118"/>
</dbReference>
<dbReference type="MINT" id="P07270"/>
<dbReference type="STRING" id="4932.YFR034C"/>
<dbReference type="iPTMnet" id="P07270"/>
<dbReference type="PaxDb" id="4932-YFR034C"/>
<dbReference type="PeptideAtlas" id="P07270"/>
<dbReference type="EnsemblFungi" id="YFR034C_mRNA">
    <property type="protein sequence ID" value="YFR034C"/>
    <property type="gene ID" value="YFR034C"/>
</dbReference>
<dbReference type="GeneID" id="850594"/>
<dbReference type="KEGG" id="sce:YFR034C"/>
<dbReference type="AGR" id="SGD:S000001930"/>
<dbReference type="SGD" id="S000001930">
    <property type="gene designation" value="PHO4"/>
</dbReference>
<dbReference type="VEuPathDB" id="FungiDB:YFR034C"/>
<dbReference type="eggNOG" id="ENOG502S1Z7">
    <property type="taxonomic scope" value="Eukaryota"/>
</dbReference>
<dbReference type="GeneTree" id="ENSGT00940000173160"/>
<dbReference type="HOGENOM" id="CLU_077481_0_0_1"/>
<dbReference type="InParanoid" id="P07270"/>
<dbReference type="OMA" id="ACRYIRH"/>
<dbReference type="OrthoDB" id="5344169at2759"/>
<dbReference type="BioCyc" id="YEAST:G3O-30481-MONOMER"/>
<dbReference type="BioGRID-ORCS" id="850594">
    <property type="hits" value="5 hits in 13 CRISPR screens"/>
</dbReference>
<dbReference type="EvolutionaryTrace" id="P07270"/>
<dbReference type="PRO" id="PR:P07270"/>
<dbReference type="Proteomes" id="UP000002311">
    <property type="component" value="Chromosome VI"/>
</dbReference>
<dbReference type="RNAct" id="P07270">
    <property type="molecule type" value="protein"/>
</dbReference>
<dbReference type="GO" id="GO:0005737">
    <property type="term" value="C:cytoplasm"/>
    <property type="evidence" value="ECO:0000314"/>
    <property type="project" value="SGD"/>
</dbReference>
<dbReference type="GO" id="GO:0005634">
    <property type="term" value="C:nucleus"/>
    <property type="evidence" value="ECO:0000314"/>
    <property type="project" value="SGD"/>
</dbReference>
<dbReference type="GO" id="GO:0003700">
    <property type="term" value="F:DNA-binding transcription factor activity"/>
    <property type="evidence" value="ECO:0000315"/>
    <property type="project" value="SGD"/>
</dbReference>
<dbReference type="GO" id="GO:0046983">
    <property type="term" value="F:protein dimerization activity"/>
    <property type="evidence" value="ECO:0007669"/>
    <property type="project" value="InterPro"/>
</dbReference>
<dbReference type="GO" id="GO:0043565">
    <property type="term" value="F:sequence-specific DNA binding"/>
    <property type="evidence" value="ECO:0000314"/>
    <property type="project" value="SGD"/>
</dbReference>
<dbReference type="GO" id="GO:0016036">
    <property type="term" value="P:cellular response to phosphate starvation"/>
    <property type="evidence" value="ECO:0000314"/>
    <property type="project" value="SGD"/>
</dbReference>
<dbReference type="GO" id="GO:0006338">
    <property type="term" value="P:chromatin remodeling"/>
    <property type="evidence" value="ECO:0000315"/>
    <property type="project" value="SGD"/>
</dbReference>
<dbReference type="GO" id="GO:0000122">
    <property type="term" value="P:negative regulation of transcription by RNA polymerase II"/>
    <property type="evidence" value="ECO:0000314"/>
    <property type="project" value="SGD"/>
</dbReference>
<dbReference type="GO" id="GO:0045937">
    <property type="term" value="P:positive regulation of phosphate metabolic process"/>
    <property type="evidence" value="ECO:0000316"/>
    <property type="project" value="SGD"/>
</dbReference>
<dbReference type="GO" id="GO:0045944">
    <property type="term" value="P:positive regulation of transcription by RNA polymerase II"/>
    <property type="evidence" value="ECO:0000315"/>
    <property type="project" value="SGD"/>
</dbReference>
<dbReference type="CDD" id="cd11392">
    <property type="entry name" value="bHLH_ScPHO4_like"/>
    <property type="match status" value="1"/>
</dbReference>
<dbReference type="FunFam" id="4.10.280.10:FF:000099">
    <property type="entry name" value="Myc-family transcription factor"/>
    <property type="match status" value="1"/>
</dbReference>
<dbReference type="Gene3D" id="4.10.280.10">
    <property type="entry name" value="Helix-loop-helix DNA-binding domain"/>
    <property type="match status" value="1"/>
</dbReference>
<dbReference type="InterPro" id="IPR011598">
    <property type="entry name" value="bHLH_dom"/>
</dbReference>
<dbReference type="InterPro" id="IPR036638">
    <property type="entry name" value="HLH_DNA-bd_sf"/>
</dbReference>
<dbReference type="PANTHER" id="PTHR10328:SF3">
    <property type="entry name" value="PROTEIN MAX"/>
    <property type="match status" value="1"/>
</dbReference>
<dbReference type="PANTHER" id="PTHR10328">
    <property type="entry name" value="PROTEIN MAX MYC-ASSOCIATED FACTOR X"/>
    <property type="match status" value="1"/>
</dbReference>
<dbReference type="Pfam" id="PF00010">
    <property type="entry name" value="HLH"/>
    <property type="match status" value="1"/>
</dbReference>
<dbReference type="SMART" id="SM00353">
    <property type="entry name" value="HLH"/>
    <property type="match status" value="1"/>
</dbReference>
<dbReference type="SUPFAM" id="SSF47459">
    <property type="entry name" value="HLH, helix-loop-helix DNA-binding domain"/>
    <property type="match status" value="1"/>
</dbReference>
<dbReference type="PROSITE" id="PS50888">
    <property type="entry name" value="BHLH"/>
    <property type="match status" value="1"/>
</dbReference>
<comment type="function">
    <text>Transcriptional activator that regulates the expression of repressible phosphatase under phosphate starvation conditions. Binds to the upstream activating sequence (UAS) of several phosphatase encoding PHO genes. Inhibited by the cyclin-CDK PHO80-PHO85 under high-phosphate conditions.</text>
</comment>
<comment type="subunit">
    <text evidence="6 8">Binds DNA as a homodimer. Interacts with transcription factor PHO2 and binds cooperatively to PHO5 UAS. Interacts with the cyclin-CDK PHO80-PHO85 and the CDK inhibitor (CKI) PHO81.</text>
</comment>
<comment type="interaction">
    <interactant intactId="EBI-13378">
        <id>P07270</id>
    </interactant>
    <interactant intactId="EBI-11420">
        <id>P52918</id>
        <label>MSN5</label>
    </interactant>
    <organismsDiffer>false</organismsDiffer>
    <experiments>2</experiments>
</comment>
<comment type="subcellular location">
    <subcellularLocation>
        <location evidence="9">Cytoplasm</location>
    </subcellularLocation>
    <subcellularLocation>
        <location evidence="1 9">Nucleus</location>
    </subcellularLocation>
    <text>Predominantly cytoplasmic under high-phosphate conditions and localized to the nucleus upon phosphate starvation.</text>
</comment>
<comment type="domain">
    <text evidence="4 5">The 9aaTAD motif (residues 75 to 83) is a transactivation domain present in a large number of yeast and animal transcription factors.</text>
</comment>
<comment type="PTM">
    <text evidence="3 7 9">Phosphorylated by the cyclin-CDK PHO80-PHO85 at five residues under high-phosphate conditions, preventing PHO4 from activating the structural PHO genes. Phosphorylation of Ser-114 and Ser-128 promotes nuclear export. Phosphorylation of Ser-152 decreases nuclear import. Phosphorylation of Ser-223 decreases the binding affinity for PHO2.</text>
</comment>
<comment type="sequence caution" evidence="10">
    <conflict type="frameshift">
        <sequence resource="EMBL-CDS" id="CAA27345"/>
    </conflict>
</comment>
<reference key="1">
    <citation type="journal article" date="1986" name="Nucleic Acids Res.">
        <title>Isolation, physical characterization and expression analysis of the Saccharomyces cerevisiae positive regulatory gene PHO4.</title>
        <authorList>
            <person name="Legrain M."/>
            <person name="de Wilde M."/>
            <person name="Hilger F."/>
        </authorList>
    </citation>
    <scope>NUCLEOTIDE SEQUENCE [GENOMIC DNA]</scope>
</reference>
<reference key="2">
    <citation type="journal article" date="1989" name="Mol. Gen. Genet.">
        <title>Mode of expression of the positive regulatory genes PHO2 and PHO4 of the phosphatase regulon in Saccharomyces cerevisiae.</title>
        <authorList>
            <person name="Yoshida K."/>
            <person name="Kuromitsu Z."/>
            <person name="Ogawa N."/>
            <person name="Oshima Y."/>
        </authorList>
    </citation>
    <scope>NUCLEOTIDE SEQUENCE [GENOMIC DNA]</scope>
</reference>
<reference key="3">
    <citation type="journal article" date="1996" name="Yeast">
        <title>Fifteen open reading frames in a 30.8 kb region of the right arm of chromosome VI from Saccharomyces cerevisiae.</title>
        <authorList>
            <person name="Eki T."/>
            <person name="Naitou M."/>
            <person name="Hagiwara H."/>
            <person name="Abe M."/>
            <person name="Ozawa M."/>
            <person name="Sasanuma S."/>
            <person name="Sasanuma M."/>
            <person name="Tsuchiya Y."/>
            <person name="Shibata T."/>
            <person name="Watanabe K."/>
            <person name="Ono A."/>
            <person name="Yamazaki M."/>
            <person name="Tashiro H."/>
            <person name="Hanaoka F."/>
            <person name="Murakami Y."/>
        </authorList>
    </citation>
    <scope>NUCLEOTIDE SEQUENCE [GENOMIC DNA]</scope>
    <source>
        <strain>ATCC 204511 / S288c / AB972</strain>
    </source>
</reference>
<reference key="4">
    <citation type="journal article" date="1995" name="Nat. Genet.">
        <title>Analysis of the nucleotide sequence of chromosome VI from Saccharomyces cerevisiae.</title>
        <authorList>
            <person name="Murakami Y."/>
            <person name="Naitou M."/>
            <person name="Hagiwara H."/>
            <person name="Shibata T."/>
            <person name="Ozawa M."/>
            <person name="Sasanuma S."/>
            <person name="Sasanuma M."/>
            <person name="Tsuchiya Y."/>
            <person name="Soeda E."/>
            <person name="Yokoyama K."/>
            <person name="Yamazaki M."/>
            <person name="Tashiro H."/>
            <person name="Eki T."/>
        </authorList>
    </citation>
    <scope>NUCLEOTIDE SEQUENCE [LARGE SCALE GENOMIC DNA]</scope>
    <source>
        <strain>ATCC 204508 / S288c</strain>
    </source>
</reference>
<reference key="5">
    <citation type="journal article" date="2014" name="G3 (Bethesda)">
        <title>The reference genome sequence of Saccharomyces cerevisiae: Then and now.</title>
        <authorList>
            <person name="Engel S.R."/>
            <person name="Dietrich F.S."/>
            <person name="Fisk D.G."/>
            <person name="Binkley G."/>
            <person name="Balakrishnan R."/>
            <person name="Costanzo M.C."/>
            <person name="Dwight S.S."/>
            <person name="Hitz B.C."/>
            <person name="Karra K."/>
            <person name="Nash R.S."/>
            <person name="Weng S."/>
            <person name="Wong E.D."/>
            <person name="Lloyd P."/>
            <person name="Skrzypek M.S."/>
            <person name="Miyasato S.R."/>
            <person name="Simison M."/>
            <person name="Cherry J.M."/>
        </authorList>
    </citation>
    <scope>GENOME REANNOTATION</scope>
    <source>
        <strain>ATCC 204508 / S288c</strain>
    </source>
</reference>
<reference key="6">
    <citation type="journal article" date="2007" name="Genome Res.">
        <title>Approaching a complete repository of sequence-verified protein-encoding clones for Saccharomyces cerevisiae.</title>
        <authorList>
            <person name="Hu Y."/>
            <person name="Rolfs A."/>
            <person name="Bhullar B."/>
            <person name="Murthy T.V.S."/>
            <person name="Zhu C."/>
            <person name="Berger M.F."/>
            <person name="Camargo A.A."/>
            <person name="Kelley F."/>
            <person name="McCarron S."/>
            <person name="Jepson D."/>
            <person name="Richardson A."/>
            <person name="Raphael J."/>
            <person name="Moreira D."/>
            <person name="Taycher E."/>
            <person name="Zuo D."/>
            <person name="Mohr S."/>
            <person name="Kane M.F."/>
            <person name="Williamson J."/>
            <person name="Simpson A.J.G."/>
            <person name="Bulyk M.L."/>
            <person name="Harlow E."/>
            <person name="Marsischky G."/>
            <person name="Kolodner R.D."/>
            <person name="LaBaer J."/>
        </authorList>
    </citation>
    <scope>NUCLEOTIDE SEQUENCE [GENOMIC DNA]</scope>
    <source>
        <strain>ATCC 204508 / S288c</strain>
    </source>
</reference>
<reference key="7">
    <citation type="journal article" date="1990" name="Mol. Cell. Biol.">
        <title>Functional domains of a positive regulatory protein, PHO4, for transcriptional control of the phosphatase regulon in Saccharomyces cerevisiae.</title>
        <authorList>
            <person name="Ogawa N."/>
            <person name="Oshima Y."/>
        </authorList>
    </citation>
    <scope>DOMAINS</scope>
</reference>
<reference key="8">
    <citation type="journal article" date="1990" name="Yeast">
        <title>The yeast regulatory gene PHO4 encodes a helix-loop-helix motif.</title>
        <authorList>
            <person name="Berben G.H.F."/>
            <person name="Legrain M."/>
            <person name="Gilliquet V."/>
            <person name="Hilger F."/>
        </authorList>
    </citation>
    <scope>HELIX-LOOP-HELIX MOTIF</scope>
</reference>
<reference key="9">
    <citation type="journal article" date="1994" name="EMBO J.">
        <title>The activation domain of a basic helix-loop-helix protein is masked by repressor interaction with domains distinct from that required for transcription regulation.</title>
        <authorList>
            <person name="Jayaraman P.-S."/>
            <person name="Hirst K."/>
            <person name="Goding C.R."/>
        </authorList>
    </citation>
    <scope>INTERACTION WITH PHO80</scope>
</reference>
<reference key="10">
    <citation type="journal article" date="1994" name="EMBO J.">
        <title>The transcription factor, the Cdk, its cyclin and their regulator: directing the transcriptional response to a nutritional signal.</title>
        <authorList>
            <person name="Hirst K."/>
            <person name="Fisher F."/>
            <person name="McAndrew P.C."/>
            <person name="Goding C.R."/>
        </authorList>
    </citation>
    <scope>INTERACTION WITH PHO2; PHO80 AND PHO81</scope>
</reference>
<reference key="11">
    <citation type="journal article" date="1994" name="Science">
        <title>Phosphorylation of the transcription factor PHO4 by a cyclin-CDK complex, PHO80-PHO85.</title>
        <authorList>
            <person name="Kaffman A."/>
            <person name="Herskowitz I."/>
            <person name="Tjian R."/>
            <person name="O'Shea E.K."/>
        </authorList>
    </citation>
    <scope>PHOSPHORYLATION</scope>
</reference>
<reference key="12">
    <citation type="journal article" date="1996" name="Science">
        <title>Regulation of PHO4 nuclear localization by the PHO80-PHO85 cyclin-CDK complex.</title>
        <authorList>
            <person name="O'Neill E.M."/>
            <person name="Kaffman A."/>
            <person name="Jolly E.R."/>
            <person name="O'Shea E.K."/>
        </authorList>
    </citation>
    <scope>PHOSPHORYLATION AT SER-100; SER-114; SER-128; SER-152 AND SER-223</scope>
    <scope>SUBCELLULAR LOCATION</scope>
</reference>
<reference key="13">
    <citation type="journal article" date="1999" name="Science">
        <title>Roles of phosphorylation sites in regulating activity of the transcription factor Pho4.</title>
        <authorList>
            <person name="Komeili A."/>
            <person name="O'Shea E.K."/>
        </authorList>
    </citation>
    <scope>PHOSPHORYLATION AT SER-100; SER-114; SER-128; SER-152 AND SER-223</scope>
</reference>
<reference key="14">
    <citation type="journal article" date="2007" name="Genomics">
        <title>Nine-amino-acid transactivation domain: establishment and prediction utilities.</title>
        <authorList>
            <person name="Piskacek S."/>
            <person name="Gregor M."/>
            <person name="Nemethova M."/>
            <person name="Grabner M."/>
            <person name="Kovarik P."/>
            <person name="Piskacek M."/>
        </authorList>
    </citation>
    <scope>DOMAIN</scope>
</reference>
<reference key="15">
    <citation type="journal article" date="2007" name="J. Proteome Res.">
        <title>Large-scale phosphorylation analysis of alpha-factor-arrested Saccharomyces cerevisiae.</title>
        <authorList>
            <person name="Li X."/>
            <person name="Gerber S.A."/>
            <person name="Rudner A.D."/>
            <person name="Beausoleil S.A."/>
            <person name="Haas W."/>
            <person name="Villen J."/>
            <person name="Elias J.E."/>
            <person name="Gygi S.P."/>
        </authorList>
    </citation>
    <scope>PHOSPHORYLATION [LARGE SCALE ANALYSIS] AT SER-223</scope>
    <scope>IDENTIFICATION BY MASS SPECTROMETRY [LARGE SCALE ANALYSIS]</scope>
    <source>
        <strain>ADR376</strain>
    </source>
</reference>
<reference key="16">
    <citation type="journal article" date="2007" name="Proc. Natl. Acad. Sci. U.S.A.">
        <title>Analysis of phosphorylation sites on proteins from Saccharomyces cerevisiae by electron transfer dissociation (ETD) mass spectrometry.</title>
        <authorList>
            <person name="Chi A."/>
            <person name="Huttenhower C."/>
            <person name="Geer L.Y."/>
            <person name="Coon J.J."/>
            <person name="Syka J.E.P."/>
            <person name="Bai D.L."/>
            <person name="Shabanowitz J."/>
            <person name="Burke D.J."/>
            <person name="Troyanskaya O.G."/>
            <person name="Hunt D.F."/>
        </authorList>
    </citation>
    <scope>PHOSPHORYLATION [LARGE SCALE ANALYSIS] AT SER-242 AND SER-243</scope>
    <scope>IDENTIFICATION BY MASS SPECTROMETRY [LARGE SCALE ANALYSIS]</scope>
</reference>
<reference key="17">
    <citation type="journal article" date="2008" name="Mol. Cell. Proteomics">
        <title>A multidimensional chromatography technology for in-depth phosphoproteome analysis.</title>
        <authorList>
            <person name="Albuquerque C.P."/>
            <person name="Smolka M.B."/>
            <person name="Payne S.H."/>
            <person name="Bafna V."/>
            <person name="Eng J."/>
            <person name="Zhou H."/>
        </authorList>
    </citation>
    <scope>PHOSPHORYLATION [LARGE SCALE ANALYSIS] AT SER-204</scope>
    <scope>IDENTIFICATION BY MASS SPECTROMETRY [LARGE SCALE ANALYSIS]</scope>
</reference>
<reference key="18">
    <citation type="journal article" date="2009" name="Science">
        <title>Global analysis of Cdk1 substrate phosphorylation sites provides insights into evolution.</title>
        <authorList>
            <person name="Holt L.J."/>
            <person name="Tuch B.B."/>
            <person name="Villen J."/>
            <person name="Johnson A.D."/>
            <person name="Gygi S.P."/>
            <person name="Morgan D.O."/>
        </authorList>
    </citation>
    <scope>PHOSPHORYLATION [LARGE SCALE ANALYSIS] AT SER-223</scope>
    <scope>IDENTIFICATION BY MASS SPECTROMETRY [LARGE SCALE ANALYSIS]</scope>
</reference>
<reference key="19">
    <citation type="journal article" date="1997" name="EMBO J.">
        <title>Crystal structure of PHO4 bHLH domain-DNA complex: flanking base recognition.</title>
        <authorList>
            <person name="Shimizu T."/>
            <person name="Toumoto A."/>
            <person name="Ihara K."/>
            <person name="Shimizu M."/>
            <person name="Kyogoku Y."/>
            <person name="Ogawa N."/>
            <person name="Oshima Y."/>
            <person name="Hakoshima T."/>
        </authorList>
    </citation>
    <scope>X-RAY CRYSTALLOGRAPHY (2.8 ANGSTROMS) OF 251-312</scope>
</reference>
<feature type="chain" id="PRO_0000127422" description="Phosphate system positive regulatory protein PHO4">
    <location>
        <begin position="1"/>
        <end position="312"/>
    </location>
</feature>
<feature type="domain" description="bHLH" evidence="1">
    <location>
        <begin position="250"/>
        <end position="306"/>
    </location>
</feature>
<feature type="region of interest" description="Interaction with PHO80">
    <location>
        <begin position="1"/>
        <end position="31"/>
    </location>
</feature>
<feature type="region of interest" description="Disordered" evidence="2">
    <location>
        <begin position="35"/>
        <end position="71"/>
    </location>
</feature>
<feature type="region of interest" description="Transcription activation domain">
    <location>
        <begin position="75"/>
        <end position="99"/>
    </location>
</feature>
<feature type="region of interest" description="Disordered" evidence="2">
    <location>
        <begin position="138"/>
        <end position="259"/>
    </location>
</feature>
<feature type="region of interest" description="Interaction with PHO80">
    <location>
        <begin position="156"/>
        <end position="200"/>
    </location>
</feature>
<feature type="region of interest" description="Interaction with PHO2" evidence="6">
    <location>
        <begin position="201"/>
        <end position="218"/>
    </location>
</feature>
<feature type="region of interest" description="Involved in oligomerization">
    <location>
        <begin position="203"/>
        <end position="227"/>
    </location>
</feature>
<feature type="short sequence motif" description="9aaTAD">
    <location>
        <begin position="75"/>
        <end position="83"/>
    </location>
</feature>
<feature type="short sequence motif" description="Nuclear localization signal">
    <location>
        <begin position="140"/>
        <end position="166"/>
    </location>
</feature>
<feature type="compositionally biased region" description="Low complexity" evidence="2">
    <location>
        <begin position="49"/>
        <end position="62"/>
    </location>
</feature>
<feature type="compositionally biased region" description="Polar residues" evidence="2">
    <location>
        <begin position="138"/>
        <end position="154"/>
    </location>
</feature>
<feature type="compositionally biased region" description="Polar residues" evidence="2">
    <location>
        <begin position="196"/>
        <end position="210"/>
    </location>
</feature>
<feature type="compositionally biased region" description="Low complexity" evidence="2">
    <location>
        <begin position="211"/>
        <end position="235"/>
    </location>
</feature>
<feature type="compositionally biased region" description="Basic and acidic residues" evidence="2">
    <location>
        <begin position="248"/>
        <end position="259"/>
    </location>
</feature>
<feature type="modified residue" description="Phosphoserine; by PHO85" evidence="3 9">
    <location>
        <position position="100"/>
    </location>
</feature>
<feature type="modified residue" description="Phosphoserine; by PHO85" evidence="3 9">
    <location>
        <position position="114"/>
    </location>
</feature>
<feature type="modified residue" description="Phosphoserine; by PHO85" evidence="3 9">
    <location>
        <position position="128"/>
    </location>
</feature>
<feature type="modified residue" description="Phosphoserine; by PHO85" evidence="3 9">
    <location>
        <position position="152"/>
    </location>
</feature>
<feature type="modified residue" description="Phosphoserine" evidence="13">
    <location>
        <position position="204"/>
    </location>
</feature>
<feature type="modified residue" description="Phosphoserine; by PHO85" evidence="3 9 12 14">
    <location>
        <position position="223"/>
    </location>
</feature>
<feature type="modified residue" description="Phosphoserine" evidence="11">
    <location>
        <position position="242"/>
    </location>
</feature>
<feature type="modified residue" description="Phosphoserine" evidence="11">
    <location>
        <position position="243"/>
    </location>
</feature>
<feature type="sequence conflict" description="In Ref. 1; CAA27345 and 2." evidence="10" ref="1 2">
    <original>A</original>
    <variation>P</variation>
    <location>
        <position position="269"/>
    </location>
</feature>
<feature type="sequence conflict" description="In Ref. 2." evidence="10" ref="2">
    <original>V</original>
    <variation>G</variation>
    <location>
        <position position="310"/>
    </location>
</feature>
<feature type="helix" evidence="15">
    <location>
        <begin position="254"/>
        <end position="258"/>
    </location>
</feature>
<feature type="helix" evidence="15">
    <location>
        <begin position="260"/>
        <end position="275"/>
    </location>
</feature>
<feature type="helix" evidence="15">
    <location>
        <begin position="279"/>
        <end position="282"/>
    </location>
</feature>
<feature type="helix" evidence="15">
    <location>
        <begin position="294"/>
        <end position="306"/>
    </location>
</feature>